<feature type="chain" id="PRO_1000088480" description="Acyl carrier protein phosphodiesterase">
    <location>
        <begin position="1"/>
        <end position="193"/>
    </location>
</feature>
<keyword id="KW-0275">Fatty acid biosynthesis</keyword>
<keyword id="KW-0276">Fatty acid metabolism</keyword>
<keyword id="KW-0378">Hydrolase</keyword>
<keyword id="KW-0444">Lipid biosynthesis</keyword>
<keyword id="KW-0443">Lipid metabolism</keyword>
<comment type="function">
    <text evidence="1">Converts holo-ACP to apo-ACP by hydrolytic cleavage of the phosphopantetheine prosthetic group from ACP.</text>
</comment>
<comment type="catalytic activity">
    <reaction evidence="1">
        <text>holo-[ACP] + H2O = apo-[ACP] + (R)-4'-phosphopantetheine + H(+)</text>
        <dbReference type="Rhea" id="RHEA:20537"/>
        <dbReference type="Rhea" id="RHEA-COMP:9685"/>
        <dbReference type="Rhea" id="RHEA-COMP:9690"/>
        <dbReference type="ChEBI" id="CHEBI:15377"/>
        <dbReference type="ChEBI" id="CHEBI:15378"/>
        <dbReference type="ChEBI" id="CHEBI:29999"/>
        <dbReference type="ChEBI" id="CHEBI:61723"/>
        <dbReference type="ChEBI" id="CHEBI:64479"/>
        <dbReference type="EC" id="3.1.4.14"/>
    </reaction>
</comment>
<comment type="similarity">
    <text evidence="1">Belongs to the AcpH family.</text>
</comment>
<name>ACPH_ECOLC</name>
<evidence type="ECO:0000255" key="1">
    <source>
        <dbReference type="HAMAP-Rule" id="MF_01950"/>
    </source>
</evidence>
<gene>
    <name evidence="1" type="primary">acpH</name>
    <name type="ordered locus">EcolC_3229</name>
</gene>
<proteinExistence type="inferred from homology"/>
<organism>
    <name type="scientific">Escherichia coli (strain ATCC 8739 / DSM 1576 / NBRC 3972 / NCIMB 8545 / WDCM 00012 / Crooks)</name>
    <dbReference type="NCBI Taxonomy" id="481805"/>
    <lineage>
        <taxon>Bacteria</taxon>
        <taxon>Pseudomonadati</taxon>
        <taxon>Pseudomonadota</taxon>
        <taxon>Gammaproteobacteria</taxon>
        <taxon>Enterobacterales</taxon>
        <taxon>Enterobacteriaceae</taxon>
        <taxon>Escherichia</taxon>
    </lineage>
</organism>
<dbReference type="EC" id="3.1.4.14" evidence="1"/>
<dbReference type="EMBL" id="CP000946">
    <property type="protein sequence ID" value="ACA78851.1"/>
    <property type="molecule type" value="Genomic_DNA"/>
</dbReference>
<dbReference type="RefSeq" id="WP_001009885.1">
    <property type="nucleotide sequence ID" value="NZ_MTFT01000010.1"/>
</dbReference>
<dbReference type="SMR" id="B1J045"/>
<dbReference type="KEGG" id="ecl:EcolC_3229"/>
<dbReference type="HOGENOM" id="CLU_099370_1_0_6"/>
<dbReference type="GO" id="GO:0008770">
    <property type="term" value="F:[acyl-carrier-protein] phosphodiesterase activity"/>
    <property type="evidence" value="ECO:0007669"/>
    <property type="project" value="UniProtKB-UniRule"/>
</dbReference>
<dbReference type="GO" id="GO:0006633">
    <property type="term" value="P:fatty acid biosynthetic process"/>
    <property type="evidence" value="ECO:0007669"/>
    <property type="project" value="UniProtKB-UniRule"/>
</dbReference>
<dbReference type="HAMAP" id="MF_01950">
    <property type="entry name" value="AcpH"/>
    <property type="match status" value="1"/>
</dbReference>
<dbReference type="InterPro" id="IPR007431">
    <property type="entry name" value="ACP_PD"/>
</dbReference>
<dbReference type="InterPro" id="IPR023491">
    <property type="entry name" value="ACP_phosphodiesterase_gpbac"/>
</dbReference>
<dbReference type="NCBIfam" id="NF007466">
    <property type="entry name" value="PRK10045.1"/>
    <property type="match status" value="1"/>
</dbReference>
<dbReference type="PANTHER" id="PTHR38764">
    <property type="entry name" value="ACYL CARRIER PROTEIN PHOSPHODIESTERASE"/>
    <property type="match status" value="1"/>
</dbReference>
<dbReference type="PANTHER" id="PTHR38764:SF1">
    <property type="entry name" value="ACYL CARRIER PROTEIN PHOSPHODIESTERASE"/>
    <property type="match status" value="1"/>
</dbReference>
<dbReference type="Pfam" id="PF04336">
    <property type="entry name" value="ACP_PD"/>
    <property type="match status" value="1"/>
</dbReference>
<dbReference type="PIRSF" id="PIRSF011489">
    <property type="entry name" value="DUF479"/>
    <property type="match status" value="1"/>
</dbReference>
<reference key="1">
    <citation type="submission" date="2008-02" db="EMBL/GenBank/DDBJ databases">
        <title>Complete sequence of Escherichia coli C str. ATCC 8739.</title>
        <authorList>
            <person name="Copeland A."/>
            <person name="Lucas S."/>
            <person name="Lapidus A."/>
            <person name="Glavina del Rio T."/>
            <person name="Dalin E."/>
            <person name="Tice H."/>
            <person name="Bruce D."/>
            <person name="Goodwin L."/>
            <person name="Pitluck S."/>
            <person name="Kiss H."/>
            <person name="Brettin T."/>
            <person name="Detter J.C."/>
            <person name="Han C."/>
            <person name="Kuske C.R."/>
            <person name="Schmutz J."/>
            <person name="Larimer F."/>
            <person name="Land M."/>
            <person name="Hauser L."/>
            <person name="Kyrpides N."/>
            <person name="Mikhailova N."/>
            <person name="Ingram L."/>
            <person name="Richardson P."/>
        </authorList>
    </citation>
    <scope>NUCLEOTIDE SEQUENCE [LARGE SCALE GENOMIC DNA]</scope>
    <source>
        <strain>ATCC 8739 / DSM 1576 / NBRC 3972 / NCIMB 8545 / WDCM 00012 / Crooks</strain>
    </source>
</reference>
<protein>
    <recommendedName>
        <fullName evidence="1">Acyl carrier protein phosphodiesterase</fullName>
        <shortName evidence="1">ACP phosphodiesterase</shortName>
        <ecNumber evidence="1">3.1.4.14</ecNumber>
    </recommendedName>
</protein>
<sequence>MNFLAHLHLAHLAESSLSGNLLADFVRGNPEESFPPDVVAGIHMHRRIDVLTDNLPEVREAREWFRSETRRVAPITLDVMWDHFLSRHWSQLSPDFPLQEFVCYAREQVMTILPDSPPRFINLNNYLWSEQWLVRYRDMDFIQNVLNGMASRRPRLDALRDSWYDLDAHYDALETRFWQFYPRMMAQASRKAL</sequence>
<accession>B1J045</accession>